<proteinExistence type="inferred from homology"/>
<feature type="chain" id="PRO_1000061508" description="Putative pre-16S rRNA nuclease">
    <location>
        <begin position="1"/>
        <end position="141"/>
    </location>
</feature>
<comment type="function">
    <text evidence="1">Could be a nuclease involved in processing of the 5'-end of pre-16S rRNA.</text>
</comment>
<comment type="subcellular location">
    <subcellularLocation>
        <location evidence="1">Cytoplasm</location>
    </subcellularLocation>
</comment>
<comment type="similarity">
    <text evidence="1">Belongs to the YqgF nuclease family.</text>
</comment>
<protein>
    <recommendedName>
        <fullName evidence="1">Putative pre-16S rRNA nuclease</fullName>
        <ecNumber evidence="1">3.1.-.-</ecNumber>
    </recommendedName>
</protein>
<reference key="1">
    <citation type="submission" date="2007-02" db="EMBL/GenBank/DDBJ databases">
        <title>Complete sequence of Clostridium thermocellum ATCC 27405.</title>
        <authorList>
            <consortium name="US DOE Joint Genome Institute"/>
            <person name="Copeland A."/>
            <person name="Lucas S."/>
            <person name="Lapidus A."/>
            <person name="Barry K."/>
            <person name="Detter J.C."/>
            <person name="Glavina del Rio T."/>
            <person name="Hammon N."/>
            <person name="Israni S."/>
            <person name="Dalin E."/>
            <person name="Tice H."/>
            <person name="Pitluck S."/>
            <person name="Chertkov O."/>
            <person name="Brettin T."/>
            <person name="Bruce D."/>
            <person name="Han C."/>
            <person name="Tapia R."/>
            <person name="Gilna P."/>
            <person name="Schmutz J."/>
            <person name="Larimer F."/>
            <person name="Land M."/>
            <person name="Hauser L."/>
            <person name="Kyrpides N."/>
            <person name="Mikhailova N."/>
            <person name="Wu J.H.D."/>
            <person name="Newcomb M."/>
            <person name="Richardson P."/>
        </authorList>
    </citation>
    <scope>NUCLEOTIDE SEQUENCE [LARGE SCALE GENOMIC DNA]</scope>
    <source>
        <strain>ATCC 27405 / DSM 1237 / JCM 9322 / NBRC 103400 / NCIMB 10682 / NRRL B-4536 / VPI 7372</strain>
    </source>
</reference>
<name>YQGF_ACET2</name>
<dbReference type="EC" id="3.1.-.-" evidence="1"/>
<dbReference type="EMBL" id="CP000568">
    <property type="protein sequence ID" value="ABN51394.1"/>
    <property type="molecule type" value="Genomic_DNA"/>
</dbReference>
<dbReference type="SMR" id="A3DBR5"/>
<dbReference type="STRING" id="203119.Cthe_0153"/>
<dbReference type="GeneID" id="35804000"/>
<dbReference type="KEGG" id="cth:Cthe_0153"/>
<dbReference type="eggNOG" id="COG0816">
    <property type="taxonomic scope" value="Bacteria"/>
</dbReference>
<dbReference type="HOGENOM" id="CLU_098240_2_0_9"/>
<dbReference type="OrthoDB" id="9796140at2"/>
<dbReference type="Proteomes" id="UP000002145">
    <property type="component" value="Chromosome"/>
</dbReference>
<dbReference type="GO" id="GO:0005829">
    <property type="term" value="C:cytosol"/>
    <property type="evidence" value="ECO:0007669"/>
    <property type="project" value="TreeGrafter"/>
</dbReference>
<dbReference type="GO" id="GO:0004518">
    <property type="term" value="F:nuclease activity"/>
    <property type="evidence" value="ECO:0007669"/>
    <property type="project" value="UniProtKB-KW"/>
</dbReference>
<dbReference type="GO" id="GO:0000967">
    <property type="term" value="P:rRNA 5'-end processing"/>
    <property type="evidence" value="ECO:0007669"/>
    <property type="project" value="UniProtKB-UniRule"/>
</dbReference>
<dbReference type="CDD" id="cd16964">
    <property type="entry name" value="YqgF"/>
    <property type="match status" value="1"/>
</dbReference>
<dbReference type="Gene3D" id="3.30.420.140">
    <property type="entry name" value="YqgF/RNase H-like domain"/>
    <property type="match status" value="1"/>
</dbReference>
<dbReference type="HAMAP" id="MF_00651">
    <property type="entry name" value="Nuclease_YqgF"/>
    <property type="match status" value="1"/>
</dbReference>
<dbReference type="InterPro" id="IPR012337">
    <property type="entry name" value="RNaseH-like_sf"/>
</dbReference>
<dbReference type="InterPro" id="IPR005227">
    <property type="entry name" value="YqgF"/>
</dbReference>
<dbReference type="InterPro" id="IPR006641">
    <property type="entry name" value="YqgF/RNaseH-like_dom"/>
</dbReference>
<dbReference type="InterPro" id="IPR037027">
    <property type="entry name" value="YqgF/RNaseH-like_dom_sf"/>
</dbReference>
<dbReference type="NCBIfam" id="TIGR00250">
    <property type="entry name" value="RNAse_H_YqgF"/>
    <property type="match status" value="1"/>
</dbReference>
<dbReference type="PANTHER" id="PTHR33317">
    <property type="entry name" value="POLYNUCLEOTIDYL TRANSFERASE, RIBONUCLEASE H-LIKE SUPERFAMILY PROTEIN"/>
    <property type="match status" value="1"/>
</dbReference>
<dbReference type="PANTHER" id="PTHR33317:SF4">
    <property type="entry name" value="POLYNUCLEOTIDYL TRANSFERASE, RIBONUCLEASE H-LIKE SUPERFAMILY PROTEIN"/>
    <property type="match status" value="1"/>
</dbReference>
<dbReference type="Pfam" id="PF03652">
    <property type="entry name" value="RuvX"/>
    <property type="match status" value="1"/>
</dbReference>
<dbReference type="SMART" id="SM00732">
    <property type="entry name" value="YqgFc"/>
    <property type="match status" value="1"/>
</dbReference>
<dbReference type="SUPFAM" id="SSF53098">
    <property type="entry name" value="Ribonuclease H-like"/>
    <property type="match status" value="1"/>
</dbReference>
<evidence type="ECO:0000255" key="1">
    <source>
        <dbReference type="HAMAP-Rule" id="MF_00651"/>
    </source>
</evidence>
<accession>A3DBR5</accession>
<organism>
    <name type="scientific">Acetivibrio thermocellus (strain ATCC 27405 / DSM 1237 / JCM 9322 / NBRC 103400 / NCIMB 10682 / NRRL B-4536 / VPI 7372)</name>
    <name type="common">Clostridium thermocellum</name>
    <dbReference type="NCBI Taxonomy" id="203119"/>
    <lineage>
        <taxon>Bacteria</taxon>
        <taxon>Bacillati</taxon>
        <taxon>Bacillota</taxon>
        <taxon>Clostridia</taxon>
        <taxon>Eubacteriales</taxon>
        <taxon>Oscillospiraceae</taxon>
        <taxon>Acetivibrio</taxon>
    </lineage>
</organism>
<sequence>MRVLGIDYGDSRIGIAISDPLGWTAQALETITWRSDVEVPLKRISELVEEYGVKTVIVGFPKNMDGTVGARGEKTIEFIDLLQQRIKDIEVIKWDERLTTVAANRTMYEMGIKKSKKKLVVDQIAAVYILQGYLDSKGKVL</sequence>
<keyword id="KW-0963">Cytoplasm</keyword>
<keyword id="KW-0378">Hydrolase</keyword>
<keyword id="KW-0540">Nuclease</keyword>
<keyword id="KW-1185">Reference proteome</keyword>
<keyword id="KW-0690">Ribosome biogenesis</keyword>
<gene>
    <name type="ordered locus">Cthe_0153</name>
</gene>